<keyword id="KW-0002">3D-structure</keyword>
<keyword id="KW-0225">Disease variant</keyword>
<keyword id="KW-0991">Intellectual disability</keyword>
<keyword id="KW-1267">Proteomics identification</keyword>
<keyword id="KW-1185">Reference proteome</keyword>
<gene>
    <name type="primary">TTI2</name>
    <name type="synonym">C8orf41</name>
</gene>
<proteinExistence type="evidence at protein level"/>
<dbReference type="EMBL" id="AK026916">
    <property type="protein sequence ID" value="BAB15590.1"/>
    <property type="molecule type" value="mRNA"/>
</dbReference>
<dbReference type="EMBL" id="AC091144">
    <property type="status" value="NOT_ANNOTATED_CDS"/>
    <property type="molecule type" value="Genomic_DNA"/>
</dbReference>
<dbReference type="EMBL" id="CH471080">
    <property type="protein sequence ID" value="EAW63397.1"/>
    <property type="molecule type" value="Genomic_DNA"/>
</dbReference>
<dbReference type="EMBL" id="CH471080">
    <property type="protein sequence ID" value="EAW63398.1"/>
    <property type="molecule type" value="Genomic_DNA"/>
</dbReference>
<dbReference type="EMBL" id="BC007387">
    <property type="protein sequence ID" value="AAH07387.1"/>
    <property type="molecule type" value="mRNA"/>
</dbReference>
<dbReference type="EMBL" id="BC066935">
    <property type="protein sequence ID" value="AAH66935.1"/>
    <property type="molecule type" value="mRNA"/>
</dbReference>
<dbReference type="CCDS" id="CCDS6090.1"/>
<dbReference type="RefSeq" id="NP_001095871.1">
    <property type="nucleotide sequence ID" value="NM_001102401.4"/>
</dbReference>
<dbReference type="RefSeq" id="NP_001252510.1">
    <property type="nucleotide sequence ID" value="NM_001265581.2"/>
</dbReference>
<dbReference type="RefSeq" id="NP_079391.2">
    <property type="nucleotide sequence ID" value="NM_025115.5"/>
</dbReference>
<dbReference type="PDB" id="7OLE">
    <property type="method" value="EM"/>
    <property type="resolution" value="3.41 A"/>
    <property type="chains" value="J=1-508"/>
</dbReference>
<dbReference type="PDBsum" id="7OLE"/>
<dbReference type="EMDB" id="EMD-12979"/>
<dbReference type="SMR" id="Q6NXR4"/>
<dbReference type="BioGRID" id="123164">
    <property type="interactions" value="69"/>
</dbReference>
<dbReference type="ComplexPortal" id="CPX-6148">
    <property type="entry name" value="TTT complex"/>
</dbReference>
<dbReference type="CORUM" id="Q6NXR4"/>
<dbReference type="FunCoup" id="Q6NXR4">
    <property type="interactions" value="2955"/>
</dbReference>
<dbReference type="IntAct" id="Q6NXR4">
    <property type="interactions" value="39"/>
</dbReference>
<dbReference type="MINT" id="Q6NXR4"/>
<dbReference type="STRING" id="9606.ENSP00000478396"/>
<dbReference type="GlyGen" id="Q6NXR4">
    <property type="glycosylation" value="1 site, 1 O-linked glycan (1 site)"/>
</dbReference>
<dbReference type="iPTMnet" id="Q6NXR4"/>
<dbReference type="PhosphoSitePlus" id="Q6NXR4"/>
<dbReference type="BioMuta" id="TTI2"/>
<dbReference type="DMDM" id="74736990"/>
<dbReference type="jPOST" id="Q6NXR4"/>
<dbReference type="MassIVE" id="Q6NXR4"/>
<dbReference type="PaxDb" id="9606-ENSP00000478396"/>
<dbReference type="PeptideAtlas" id="Q6NXR4"/>
<dbReference type="ProteomicsDB" id="66765"/>
<dbReference type="Pumba" id="Q6NXR4"/>
<dbReference type="Antibodypedia" id="10728">
    <property type="antibodies" value="47 antibodies from 17 providers"/>
</dbReference>
<dbReference type="DNASU" id="80185"/>
<dbReference type="Ensembl" id="ENST00000360742.9">
    <property type="protein sequence ID" value="ENSP00000353971.5"/>
    <property type="gene ID" value="ENSG00000129696.13"/>
</dbReference>
<dbReference type="Ensembl" id="ENST00000431156.7">
    <property type="protein sequence ID" value="ENSP00000411169.3"/>
    <property type="gene ID" value="ENSG00000129696.13"/>
</dbReference>
<dbReference type="Ensembl" id="ENST00000613904.1">
    <property type="protein sequence ID" value="ENSP00000478396.1"/>
    <property type="gene ID" value="ENSG00000129696.13"/>
</dbReference>
<dbReference type="GeneID" id="80185"/>
<dbReference type="KEGG" id="hsa:80185"/>
<dbReference type="MANE-Select" id="ENST00000431156.7">
    <property type="protein sequence ID" value="ENSP00000411169.3"/>
    <property type="RefSeq nucleotide sequence ID" value="NM_001102401.4"/>
    <property type="RefSeq protein sequence ID" value="NP_001095871.1"/>
</dbReference>
<dbReference type="UCSC" id="uc003xjl.6">
    <property type="organism name" value="human"/>
</dbReference>
<dbReference type="AGR" id="HGNC:26262"/>
<dbReference type="CTD" id="80185"/>
<dbReference type="DisGeNET" id="80185"/>
<dbReference type="GeneCards" id="TTI2"/>
<dbReference type="HGNC" id="HGNC:26262">
    <property type="gene designation" value="TTI2"/>
</dbReference>
<dbReference type="HPA" id="ENSG00000129696">
    <property type="expression patterns" value="Low tissue specificity"/>
</dbReference>
<dbReference type="MalaCards" id="TTI2"/>
<dbReference type="MIM" id="614426">
    <property type="type" value="gene"/>
</dbReference>
<dbReference type="MIM" id="615541">
    <property type="type" value="phenotype"/>
</dbReference>
<dbReference type="neXtProt" id="NX_Q6NXR4"/>
<dbReference type="OpenTargets" id="ENSG00000129696"/>
<dbReference type="Orphanet" id="391307">
    <property type="disease" value="Severe intellectual disability-short stature-behavioral abnormalities-facial dysmorphism syndrome"/>
</dbReference>
<dbReference type="PharmGKB" id="PA142672360"/>
<dbReference type="VEuPathDB" id="HostDB:ENSG00000129696"/>
<dbReference type="eggNOG" id="ENOG502QVMM">
    <property type="taxonomic scope" value="Eukaryota"/>
</dbReference>
<dbReference type="GeneTree" id="ENSGT00390000003878"/>
<dbReference type="HOGENOM" id="CLU_047507_0_0_1"/>
<dbReference type="InParanoid" id="Q6NXR4"/>
<dbReference type="OMA" id="NHCSQGQ"/>
<dbReference type="OrthoDB" id="6417021at2759"/>
<dbReference type="PAN-GO" id="Q6NXR4">
    <property type="GO annotations" value="4 GO annotations based on evolutionary models"/>
</dbReference>
<dbReference type="PhylomeDB" id="Q6NXR4"/>
<dbReference type="TreeFam" id="TF328871"/>
<dbReference type="PathwayCommons" id="Q6NXR4"/>
<dbReference type="SignaLink" id="Q6NXR4"/>
<dbReference type="BioGRID-ORCS" id="80185">
    <property type="hits" value="665 hits in 1175 CRISPR screens"/>
</dbReference>
<dbReference type="ChiTaRS" id="TTI2">
    <property type="organism name" value="human"/>
</dbReference>
<dbReference type="GenomeRNAi" id="80185"/>
<dbReference type="Pharos" id="Q6NXR4">
    <property type="development level" value="Tdark"/>
</dbReference>
<dbReference type="PRO" id="PR:Q6NXR4"/>
<dbReference type="Proteomes" id="UP000005640">
    <property type="component" value="Chromosome 8"/>
</dbReference>
<dbReference type="RNAct" id="Q6NXR4">
    <property type="molecule type" value="protein"/>
</dbReference>
<dbReference type="Bgee" id="ENSG00000129696">
    <property type="expression patterns" value="Expressed in male germ line stem cell (sensu Vertebrata) in testis and 142 other cell types or tissues"/>
</dbReference>
<dbReference type="ExpressionAtlas" id="Q6NXR4">
    <property type="expression patterns" value="baseline and differential"/>
</dbReference>
<dbReference type="GO" id="GO:0005634">
    <property type="term" value="C:nucleus"/>
    <property type="evidence" value="ECO:0000303"/>
    <property type="project" value="ComplexPortal"/>
</dbReference>
<dbReference type="GO" id="GO:0110078">
    <property type="term" value="C:TTT Hsp90 cochaperone complex"/>
    <property type="evidence" value="ECO:0000353"/>
    <property type="project" value="ComplexPortal"/>
</dbReference>
<dbReference type="GO" id="GO:2000003">
    <property type="term" value="P:positive regulation of DNA damage checkpoint"/>
    <property type="evidence" value="ECO:0000303"/>
    <property type="project" value="ComplexPortal"/>
</dbReference>
<dbReference type="GO" id="GO:0050821">
    <property type="term" value="P:protein stabilization"/>
    <property type="evidence" value="ECO:0000303"/>
    <property type="project" value="ComplexPortal"/>
</dbReference>
<dbReference type="InterPro" id="IPR016024">
    <property type="entry name" value="ARM-type_fold"/>
</dbReference>
<dbReference type="InterPro" id="IPR018870">
    <property type="entry name" value="Tti2"/>
</dbReference>
<dbReference type="PANTHER" id="PTHR32226">
    <property type="entry name" value="TELO2-INTERACTING PROTEIN 2"/>
    <property type="match status" value="1"/>
</dbReference>
<dbReference type="PANTHER" id="PTHR32226:SF2">
    <property type="entry name" value="TELO2-INTERACTING PROTEIN 2"/>
    <property type="match status" value="1"/>
</dbReference>
<dbReference type="Pfam" id="PF10521">
    <property type="entry name" value="Tti2"/>
    <property type="match status" value="1"/>
</dbReference>
<dbReference type="SUPFAM" id="SSF48371">
    <property type="entry name" value="ARM repeat"/>
    <property type="match status" value="1"/>
</dbReference>
<protein>
    <recommendedName>
        <fullName>TELO2-interacting protein 2</fullName>
    </recommendedName>
</protein>
<organism>
    <name type="scientific">Homo sapiens</name>
    <name type="common">Human</name>
    <dbReference type="NCBI Taxonomy" id="9606"/>
    <lineage>
        <taxon>Eukaryota</taxon>
        <taxon>Metazoa</taxon>
        <taxon>Chordata</taxon>
        <taxon>Craniata</taxon>
        <taxon>Vertebrata</taxon>
        <taxon>Euteleostomi</taxon>
        <taxon>Mammalia</taxon>
        <taxon>Eutheria</taxon>
        <taxon>Euarchontoglires</taxon>
        <taxon>Primates</taxon>
        <taxon>Haplorrhini</taxon>
        <taxon>Catarrhini</taxon>
        <taxon>Hominidae</taxon>
        <taxon>Homo</taxon>
    </lineage>
</organism>
<reference key="1">
    <citation type="journal article" date="2004" name="Nat. Genet.">
        <title>Complete sequencing and characterization of 21,243 full-length human cDNAs.</title>
        <authorList>
            <person name="Ota T."/>
            <person name="Suzuki Y."/>
            <person name="Nishikawa T."/>
            <person name="Otsuki T."/>
            <person name="Sugiyama T."/>
            <person name="Irie R."/>
            <person name="Wakamatsu A."/>
            <person name="Hayashi K."/>
            <person name="Sato H."/>
            <person name="Nagai K."/>
            <person name="Kimura K."/>
            <person name="Makita H."/>
            <person name="Sekine M."/>
            <person name="Obayashi M."/>
            <person name="Nishi T."/>
            <person name="Shibahara T."/>
            <person name="Tanaka T."/>
            <person name="Ishii S."/>
            <person name="Yamamoto J."/>
            <person name="Saito K."/>
            <person name="Kawai Y."/>
            <person name="Isono Y."/>
            <person name="Nakamura Y."/>
            <person name="Nagahari K."/>
            <person name="Murakami K."/>
            <person name="Yasuda T."/>
            <person name="Iwayanagi T."/>
            <person name="Wagatsuma M."/>
            <person name="Shiratori A."/>
            <person name="Sudo H."/>
            <person name="Hosoiri T."/>
            <person name="Kaku Y."/>
            <person name="Kodaira H."/>
            <person name="Kondo H."/>
            <person name="Sugawara M."/>
            <person name="Takahashi M."/>
            <person name="Kanda K."/>
            <person name="Yokoi T."/>
            <person name="Furuya T."/>
            <person name="Kikkawa E."/>
            <person name="Omura Y."/>
            <person name="Abe K."/>
            <person name="Kamihara K."/>
            <person name="Katsuta N."/>
            <person name="Sato K."/>
            <person name="Tanikawa M."/>
            <person name="Yamazaki M."/>
            <person name="Ninomiya K."/>
            <person name="Ishibashi T."/>
            <person name="Yamashita H."/>
            <person name="Murakawa K."/>
            <person name="Fujimori K."/>
            <person name="Tanai H."/>
            <person name="Kimata M."/>
            <person name="Watanabe M."/>
            <person name="Hiraoka S."/>
            <person name="Chiba Y."/>
            <person name="Ishida S."/>
            <person name="Ono Y."/>
            <person name="Takiguchi S."/>
            <person name="Watanabe S."/>
            <person name="Yosida M."/>
            <person name="Hotuta T."/>
            <person name="Kusano J."/>
            <person name="Kanehori K."/>
            <person name="Takahashi-Fujii A."/>
            <person name="Hara H."/>
            <person name="Tanase T.-O."/>
            <person name="Nomura Y."/>
            <person name="Togiya S."/>
            <person name="Komai F."/>
            <person name="Hara R."/>
            <person name="Takeuchi K."/>
            <person name="Arita M."/>
            <person name="Imose N."/>
            <person name="Musashino K."/>
            <person name="Yuuki H."/>
            <person name="Oshima A."/>
            <person name="Sasaki N."/>
            <person name="Aotsuka S."/>
            <person name="Yoshikawa Y."/>
            <person name="Matsunawa H."/>
            <person name="Ichihara T."/>
            <person name="Shiohata N."/>
            <person name="Sano S."/>
            <person name="Moriya S."/>
            <person name="Momiyama H."/>
            <person name="Satoh N."/>
            <person name="Takami S."/>
            <person name="Terashima Y."/>
            <person name="Suzuki O."/>
            <person name="Nakagawa S."/>
            <person name="Senoh A."/>
            <person name="Mizoguchi H."/>
            <person name="Goto Y."/>
            <person name="Shimizu F."/>
            <person name="Wakebe H."/>
            <person name="Hishigaki H."/>
            <person name="Watanabe T."/>
            <person name="Sugiyama A."/>
            <person name="Takemoto M."/>
            <person name="Kawakami B."/>
            <person name="Yamazaki M."/>
            <person name="Watanabe K."/>
            <person name="Kumagai A."/>
            <person name="Itakura S."/>
            <person name="Fukuzumi Y."/>
            <person name="Fujimori Y."/>
            <person name="Komiyama M."/>
            <person name="Tashiro H."/>
            <person name="Tanigami A."/>
            <person name="Fujiwara T."/>
            <person name="Ono T."/>
            <person name="Yamada K."/>
            <person name="Fujii Y."/>
            <person name="Ozaki K."/>
            <person name="Hirao M."/>
            <person name="Ohmori Y."/>
            <person name="Kawabata A."/>
            <person name="Hikiji T."/>
            <person name="Kobatake N."/>
            <person name="Inagaki H."/>
            <person name="Ikema Y."/>
            <person name="Okamoto S."/>
            <person name="Okitani R."/>
            <person name="Kawakami T."/>
            <person name="Noguchi S."/>
            <person name="Itoh T."/>
            <person name="Shigeta K."/>
            <person name="Senba T."/>
            <person name="Matsumura K."/>
            <person name="Nakajima Y."/>
            <person name="Mizuno T."/>
            <person name="Morinaga M."/>
            <person name="Sasaki M."/>
            <person name="Togashi T."/>
            <person name="Oyama M."/>
            <person name="Hata H."/>
            <person name="Watanabe M."/>
            <person name="Komatsu T."/>
            <person name="Mizushima-Sugano J."/>
            <person name="Satoh T."/>
            <person name="Shirai Y."/>
            <person name="Takahashi Y."/>
            <person name="Nakagawa K."/>
            <person name="Okumura K."/>
            <person name="Nagase T."/>
            <person name="Nomura N."/>
            <person name="Kikuchi H."/>
            <person name="Masuho Y."/>
            <person name="Yamashita R."/>
            <person name="Nakai K."/>
            <person name="Yada T."/>
            <person name="Nakamura Y."/>
            <person name="Ohara O."/>
            <person name="Isogai T."/>
            <person name="Sugano S."/>
        </authorList>
    </citation>
    <scope>NUCLEOTIDE SEQUENCE [LARGE SCALE MRNA]</scope>
    <scope>VARIANT GLY-63</scope>
    <source>
        <tissue>Colon</tissue>
    </source>
</reference>
<reference key="2">
    <citation type="journal article" date="2006" name="Nature">
        <title>DNA sequence and analysis of human chromosome 8.</title>
        <authorList>
            <person name="Nusbaum C."/>
            <person name="Mikkelsen T.S."/>
            <person name="Zody M.C."/>
            <person name="Asakawa S."/>
            <person name="Taudien S."/>
            <person name="Garber M."/>
            <person name="Kodira C.D."/>
            <person name="Schueler M.G."/>
            <person name="Shimizu A."/>
            <person name="Whittaker C.A."/>
            <person name="Chang J.L."/>
            <person name="Cuomo C.A."/>
            <person name="Dewar K."/>
            <person name="FitzGerald M.G."/>
            <person name="Yang X."/>
            <person name="Allen N.R."/>
            <person name="Anderson S."/>
            <person name="Asakawa T."/>
            <person name="Blechschmidt K."/>
            <person name="Bloom T."/>
            <person name="Borowsky M.L."/>
            <person name="Butler J."/>
            <person name="Cook A."/>
            <person name="Corum B."/>
            <person name="DeArellano K."/>
            <person name="DeCaprio D."/>
            <person name="Dooley K.T."/>
            <person name="Dorris L. III"/>
            <person name="Engels R."/>
            <person name="Gloeckner G."/>
            <person name="Hafez N."/>
            <person name="Hagopian D.S."/>
            <person name="Hall J.L."/>
            <person name="Ishikawa S.K."/>
            <person name="Jaffe D.B."/>
            <person name="Kamat A."/>
            <person name="Kudoh J."/>
            <person name="Lehmann R."/>
            <person name="Lokitsang T."/>
            <person name="Macdonald P."/>
            <person name="Major J.E."/>
            <person name="Matthews C.D."/>
            <person name="Mauceli E."/>
            <person name="Menzel U."/>
            <person name="Mihalev A.H."/>
            <person name="Minoshima S."/>
            <person name="Murayama Y."/>
            <person name="Naylor J.W."/>
            <person name="Nicol R."/>
            <person name="Nguyen C."/>
            <person name="O'Leary S.B."/>
            <person name="O'Neill K."/>
            <person name="Parker S.C.J."/>
            <person name="Polley A."/>
            <person name="Raymond C.K."/>
            <person name="Reichwald K."/>
            <person name="Rodriguez J."/>
            <person name="Sasaki T."/>
            <person name="Schilhabel M."/>
            <person name="Siddiqui R."/>
            <person name="Smith C.L."/>
            <person name="Sneddon T.P."/>
            <person name="Talamas J.A."/>
            <person name="Tenzin P."/>
            <person name="Topham K."/>
            <person name="Venkataraman V."/>
            <person name="Wen G."/>
            <person name="Yamazaki S."/>
            <person name="Young S.K."/>
            <person name="Zeng Q."/>
            <person name="Zimmer A.R."/>
            <person name="Rosenthal A."/>
            <person name="Birren B.W."/>
            <person name="Platzer M."/>
            <person name="Shimizu N."/>
            <person name="Lander E.S."/>
        </authorList>
    </citation>
    <scope>NUCLEOTIDE SEQUENCE [LARGE SCALE GENOMIC DNA]</scope>
</reference>
<reference key="3">
    <citation type="submission" date="2005-09" db="EMBL/GenBank/DDBJ databases">
        <authorList>
            <person name="Mural R.J."/>
            <person name="Istrail S."/>
            <person name="Sutton G.G."/>
            <person name="Florea L."/>
            <person name="Halpern A.L."/>
            <person name="Mobarry C.M."/>
            <person name="Lippert R."/>
            <person name="Walenz B."/>
            <person name="Shatkay H."/>
            <person name="Dew I."/>
            <person name="Miller J.R."/>
            <person name="Flanigan M.J."/>
            <person name="Edwards N.J."/>
            <person name="Bolanos R."/>
            <person name="Fasulo D."/>
            <person name="Halldorsson B.V."/>
            <person name="Hannenhalli S."/>
            <person name="Turner R."/>
            <person name="Yooseph S."/>
            <person name="Lu F."/>
            <person name="Nusskern D.R."/>
            <person name="Shue B.C."/>
            <person name="Zheng X.H."/>
            <person name="Zhong F."/>
            <person name="Delcher A.L."/>
            <person name="Huson D.H."/>
            <person name="Kravitz S.A."/>
            <person name="Mouchard L."/>
            <person name="Reinert K."/>
            <person name="Remington K.A."/>
            <person name="Clark A.G."/>
            <person name="Waterman M.S."/>
            <person name="Eichler E.E."/>
            <person name="Adams M.D."/>
            <person name="Hunkapiller M.W."/>
            <person name="Myers E.W."/>
            <person name="Venter J.C."/>
        </authorList>
    </citation>
    <scope>NUCLEOTIDE SEQUENCE [LARGE SCALE GENOMIC DNA]</scope>
    <scope>VARIANT GLY-63</scope>
</reference>
<reference key="4">
    <citation type="journal article" date="2004" name="Genome Res.">
        <title>The status, quality, and expansion of the NIH full-length cDNA project: the Mammalian Gene Collection (MGC).</title>
        <authorList>
            <consortium name="The MGC Project Team"/>
        </authorList>
    </citation>
    <scope>NUCLEOTIDE SEQUENCE [LARGE SCALE MRNA]</scope>
    <scope>VARIANT GLY-63</scope>
    <source>
        <tissue>Skin</tissue>
        <tissue>Testis</tissue>
    </source>
</reference>
<reference key="5">
    <citation type="journal article" date="2010" name="Genes Dev.">
        <title>A genetic screen identifies the Triple T complex required for DNA damage signaling and ATM and ATR stability.</title>
        <authorList>
            <person name="Hurov K.E."/>
            <person name="Cotta-Ramusino C."/>
            <person name="Elledge S.J."/>
        </authorList>
    </citation>
    <scope>FUNCTION</scope>
    <scope>INTERACTION WITH TELO2 AND TTI1</scope>
</reference>
<reference key="6">
    <citation type="journal article" date="2010" name="Genes Dev.">
        <title>Tel2 structure and function in the Hsp90-dependent maturation of mTOR and ATR complexes.</title>
        <authorList>
            <person name="Takai H."/>
            <person name="Xie Y."/>
            <person name="de Lange T."/>
            <person name="Pavletich N.P."/>
        </authorList>
    </citation>
    <scope>FUNCTION</scope>
    <scope>INTERACTION WITH TTI1 AND TELO2</scope>
</reference>
<reference key="7">
    <citation type="journal article" date="2011" name="BMC Syst. Biol.">
        <title>Initial characterization of the human central proteome.</title>
        <authorList>
            <person name="Burkard T.R."/>
            <person name="Planyavsky M."/>
            <person name="Kaupe I."/>
            <person name="Breitwieser F.P."/>
            <person name="Buerckstuemmer T."/>
            <person name="Bennett K.L."/>
            <person name="Superti-Furga G."/>
            <person name="Colinge J."/>
        </authorList>
    </citation>
    <scope>IDENTIFICATION BY MASS SPECTROMETRY [LARGE SCALE ANALYSIS]</scope>
</reference>
<reference key="8">
    <citation type="journal article" date="2016" name="Dev. Cell">
        <title>WAC regulates mTOR activity by acting as an adaptor for the TTT and Pontin/Reptin complexes.</title>
        <authorList>
            <person name="David-Morrison G."/>
            <person name="Xu Z."/>
            <person name="Rui Y.N."/>
            <person name="Charng W.L."/>
            <person name="Jaiswal M."/>
            <person name="Yamamoto S."/>
            <person name="Xiong B."/>
            <person name="Zhang K."/>
            <person name="Sandoval H."/>
            <person name="Duraine L."/>
            <person name="Zuo Z."/>
            <person name="Zhang S."/>
            <person name="Bellen H.J."/>
        </authorList>
    </citation>
    <scope>INTERACTION WITH WAC</scope>
</reference>
<reference key="9">
    <citation type="journal article" date="2013" name="Hum. Mutat.">
        <title>Mutation in TTI2 reveals a role for triple T complex in human brain development.</title>
        <authorList>
            <person name="Langouet M."/>
            <person name="Saadi A."/>
            <person name="Rieunier G."/>
            <person name="Moutton S."/>
            <person name="Siquier-Pernet K."/>
            <person name="Fernet M."/>
            <person name="Nitschke P."/>
            <person name="Munnich A."/>
            <person name="Stern M.H."/>
            <person name="Chaouch M."/>
            <person name="Colleaux L."/>
        </authorList>
    </citation>
    <scope>VARIANT MRT39 ASN-436</scope>
</reference>
<sequence>MELDSALEAPSQEDSNLSEELSHSAFGQAFSKILHCLARPEARRGNVKDAVLKDLGDLIEATEFDRLFEGTGARLRGMPETLGQVAKALEKYAAPSKEEEGGGDGHSEAAEKAAQVGLLFLKLLGKVETAKNSLVGPAWQTGLHHLAGPVYIFAITHSLEQPWTTPRSREVAREVLTSLLQVTECGSVAGFLHGENEDEKGRLSVILGLLKPDLYKESWKNNPAIKHVFSWTLQQVTRPWLSQHLERVLPASLVISDDYQTENKILGVHCLHHIVLNVPAADLLQYNRAQVLYHAISNHLYTPEHHLIQAVLLCLLDLFPILEKTLHWKGDGARPTTHCDEVLRLILTHMEPEHRLLLRRTYARNLPAFVNRLGILTVRHLKRLERVIIGYLEVYDGPEEEARLKILETLKLLMQHTWPRVSCRLVVLLKALLKLICDVARDPNLTPESVKSALLQEATDCLILLDRCSQGRVKGLLAKIPQSCEDRKVVNYIRKVQQVSEGAPYNGT</sequence>
<feature type="chain" id="PRO_0000279414" description="TELO2-interacting protein 2">
    <location>
        <begin position="1"/>
        <end position="508"/>
    </location>
</feature>
<feature type="region of interest" description="Disordered" evidence="1">
    <location>
        <begin position="1"/>
        <end position="20"/>
    </location>
</feature>
<feature type="sequence variant" id="VAR_030886" description="In dbSNP:rs2304748." evidence="2 3 8">
    <original>E</original>
    <variation>G</variation>
    <location>
        <position position="63"/>
    </location>
</feature>
<feature type="sequence variant" id="VAR_030887" description="In dbSNP:rs3736497.">
    <original>L</original>
    <variation>R</variation>
    <location>
        <position position="425"/>
    </location>
</feature>
<feature type="sequence variant" id="VAR_070671" description="In MRT39; impaired TTT complex formation; dbSNP:rs398122367." evidence="6">
    <original>I</original>
    <variation>N</variation>
    <location>
        <position position="436"/>
    </location>
</feature>
<feature type="sequence conflict" description="In Ref. 1; BAB15590." evidence="9" ref="1">
    <original>C</original>
    <variation>R</variation>
    <location>
        <position position="468"/>
    </location>
</feature>
<evidence type="ECO:0000256" key="1">
    <source>
        <dbReference type="SAM" id="MobiDB-lite"/>
    </source>
</evidence>
<evidence type="ECO:0000269" key="2">
    <source>
    </source>
</evidence>
<evidence type="ECO:0000269" key="3">
    <source>
    </source>
</evidence>
<evidence type="ECO:0000269" key="4">
    <source>
    </source>
</evidence>
<evidence type="ECO:0000269" key="5">
    <source>
    </source>
</evidence>
<evidence type="ECO:0000269" key="6">
    <source>
    </source>
</evidence>
<evidence type="ECO:0000269" key="7">
    <source>
    </source>
</evidence>
<evidence type="ECO:0000269" key="8">
    <source ref="3"/>
</evidence>
<evidence type="ECO:0000305" key="9"/>
<name>TTI2_HUMAN</name>
<accession>Q6NXR4</accession>
<accession>D3DSV7</accession>
<accession>Q96IM2</accession>
<accession>Q9H5N4</accession>
<comment type="function">
    <text evidence="4 5">Regulator of the DNA damage response (DDR). Part of the TTT complex that is required to stabilize protein levels of the phosphatidylinositol 3-kinase-related protein kinase (PIKK) family proteins. The TTT complex is involved in the cellular resistance to DNA damage stresses, like ionizing radiation (IR), ultraviolet (UV) and mitomycin C (MMC). Together with the TTT complex and HSP90 may participate in the proper folding of newly synthesized PIKKs.</text>
</comment>
<comment type="subunit">
    <text evidence="4 5 7">Component of the TTT complex composed of TELO2, TTI1 and TTI2. Interacts with TELO2 and TTI1 (PubMed:20801936, PubMed:20810650). Interacts with WAC; WAC positively regulates MTOR activity by promoting the assembly of the TTT complex and the RUVBL complex composed of RUVBL1 and RUVBL2 into the TTT-RUVBL complex which leads to the dimerization of the mTORC1 complex and its subsequent activation (PubMed:26812014).</text>
</comment>
<comment type="disease" evidence="6">
    <disease id="DI-03963">
        <name>Intellectual developmental disorder, autosomal recessive 39</name>
        <acronym>MRT39</acronym>
        <description>A disorder characterized by significantly below average general intellectual functioning associated with impairments in adaptive behavior and manifested during the developmental period. MRT39 affected individuals show delayed psychomotor development, severe speech delay, short stature, kyphoscoliosis, and dysmorphic facial features. Behavioral abnormalities include hyperactivity, aggression, and stereotypic movements.</description>
        <dbReference type="MIM" id="615541"/>
    </disease>
    <text>The disease is caused by variants affecting the gene represented in this entry.</text>
</comment>
<comment type="similarity">
    <text evidence="9">Belongs to the TTI2 family.</text>
</comment>